<sequence length="360" mass="41280">MAPLGTTVLLWSLLRSSPGVERVCFRARIQPWHGGLLQPLPCSFEMGLPRRRFSSEAAESGSPETKKPTFMDEEVQSILTKMTGLNLQKTFKPAIQELKPPTYKLMTQAQLEEATRQAVEAAKVRLKMPPVLEERVPINDVLAEDKILEGTETTKYVFTDISYSIPHRERFIVVREPSGTLRKASWEERDRMIQVYFPKEGRKILTPIIFKEENLRTMYSQDRHVDVLNLCFAQFEPDSTEYIKVHHKTYEDIDKRGKYDLLRSTRYFGGMVWYFVNNKKIDGLLIDQIQRDLIDDATNLVQLYHVLHPDGQSAQGAKDQAAEGINLIKVFAKTEAQKGAYIELTLQTYQEALSRHSAAS</sequence>
<comment type="subunit">
    <text evidence="2">Component of the mitochondrial small ribosomal subunit (mt-SSU). Mature mammalian 55S mitochondrial ribosomes consist of a small (28S) and a large (39S) subunit. The 28S small subunit contains a 12S ribosomal RNA (12S mt-rRNA) and 30 different proteins. The 39S large subunit contains a 16S rRNA (16S mt-rRNA), a copy of mitochondrial valine transfer RNA (mt-tRNA(Val)), which plays an integral structural role, and 52 different proteins.</text>
</comment>
<comment type="interaction">
    <interactant intactId="EBI-1050752">
        <id>P82650</id>
    </interactant>
    <interactant intactId="EBI-750085">
        <id>Q9Y676</id>
        <label>MRPS18B</label>
    </interactant>
    <organismsDiffer>false</organismsDiffer>
    <experiments>5</experiments>
</comment>
<comment type="subcellular location">
    <subcellularLocation>
        <location evidence="2">Mitochondrion</location>
    </subcellularLocation>
</comment>
<comment type="alternative products">
    <event type="alternative splicing"/>
    <isoform>
        <id>P82650-1</id>
        <name>1</name>
        <sequence type="displayed"/>
    </isoform>
    <isoform>
        <id>P82650-2</id>
        <name>2</name>
        <sequence type="described" ref="VSP_056634 VSP_056635 VSP_056636"/>
    </isoform>
</comment>
<comment type="disease" evidence="1">
    <disease id="DI-01368">
        <name>Combined oxidative phosphorylation deficiency 5</name>
        <acronym>COXPD5</acronym>
        <description>A mitochondrial disease resulting in severe metabolic acidosis, edema, hypertrophic cardiomyopathy, tubulopathy, and hypotonia.</description>
        <dbReference type="MIM" id="611719"/>
    </disease>
    <text>The disease is caused by variants affecting the gene represented in this entry.</text>
</comment>
<comment type="disease" evidence="3">
    <disease id="DI-05334">
        <name>Ovarian dysgenesis 7</name>
        <acronym>ODG7</acronym>
        <description>A form of ovarian dysgenesis, a disorder characterized by lack of spontaneous pubertal development, primary amenorrhea, uterine hypoplasia, and hypergonadotropic hypogonadism as a result of streak gonads. ODG7 is an autosomal recessive condition.</description>
        <dbReference type="MIM" id="618117"/>
    </disease>
    <text>The disease may be caused by variants affecting the gene represented in this entry.</text>
</comment>
<comment type="similarity">
    <text evidence="6">Belongs to the mitochondrion-specific ribosomal protein mS22 family.</text>
</comment>
<organism>
    <name type="scientific">Homo sapiens</name>
    <name type="common">Human</name>
    <dbReference type="NCBI Taxonomy" id="9606"/>
    <lineage>
        <taxon>Eukaryota</taxon>
        <taxon>Metazoa</taxon>
        <taxon>Chordata</taxon>
        <taxon>Craniata</taxon>
        <taxon>Vertebrata</taxon>
        <taxon>Euteleostomi</taxon>
        <taxon>Mammalia</taxon>
        <taxon>Eutheria</taxon>
        <taxon>Euarchontoglires</taxon>
        <taxon>Primates</taxon>
        <taxon>Haplorrhini</taxon>
        <taxon>Catarrhini</taxon>
        <taxon>Hominidae</taxon>
        <taxon>Homo</taxon>
    </lineage>
</organism>
<protein>
    <recommendedName>
        <fullName evidence="4">Small ribosomal subunit protein mS22</fullName>
    </recommendedName>
    <alternativeName>
        <fullName>28S ribosomal protein S22, mitochondrial</fullName>
        <shortName>MRP-S22</shortName>
        <shortName>S22mt</shortName>
    </alternativeName>
</protein>
<dbReference type="EMBL" id="AF321613">
    <property type="protein sequence ID" value="AAK01406.1"/>
    <property type="molecule type" value="mRNA"/>
</dbReference>
<dbReference type="EMBL" id="AF063603">
    <property type="protein sequence ID" value="AAG43162.1"/>
    <property type="molecule type" value="mRNA"/>
</dbReference>
<dbReference type="EMBL" id="AF226045">
    <property type="protein sequence ID" value="AAF86945.1"/>
    <property type="molecule type" value="mRNA"/>
</dbReference>
<dbReference type="EMBL" id="AC024933">
    <property type="status" value="NOT_ANNOTATED_CDS"/>
    <property type="molecule type" value="Genomic_DNA"/>
</dbReference>
<dbReference type="EMBL" id="AC069525">
    <property type="status" value="NOT_ANNOTATED_CDS"/>
    <property type="molecule type" value="Genomic_DNA"/>
</dbReference>
<dbReference type="EMBL" id="AC119740">
    <property type="status" value="NOT_ANNOTATED_CDS"/>
    <property type="molecule type" value="Genomic_DNA"/>
</dbReference>
<dbReference type="EMBL" id="AC130416">
    <property type="status" value="NOT_ANNOTATED_CDS"/>
    <property type="molecule type" value="Genomic_DNA"/>
</dbReference>
<dbReference type="EMBL" id="BC009296">
    <property type="protein sequence ID" value="AAH09296.1"/>
    <property type="molecule type" value="mRNA"/>
</dbReference>
<dbReference type="CCDS" id="CCDS3107.1">
    <molecule id="P82650-1"/>
</dbReference>
<dbReference type="RefSeq" id="NP_064576.1">
    <molecule id="P82650-1"/>
    <property type="nucleotide sequence ID" value="NM_020191.4"/>
</dbReference>
<dbReference type="PDB" id="3J9M">
    <property type="method" value="EM"/>
    <property type="resolution" value="3.50 A"/>
    <property type="chains" value="AR=1-360"/>
</dbReference>
<dbReference type="PDB" id="6NU2">
    <property type="method" value="EM"/>
    <property type="resolution" value="3.90 A"/>
    <property type="chains" value="AR=67-308"/>
</dbReference>
<dbReference type="PDB" id="6NU3">
    <property type="method" value="EM"/>
    <property type="resolution" value="4.40 A"/>
    <property type="chains" value="AR=1-360"/>
</dbReference>
<dbReference type="PDB" id="6RW4">
    <property type="method" value="EM"/>
    <property type="resolution" value="2.97 A"/>
    <property type="chains" value="R=1-360"/>
</dbReference>
<dbReference type="PDB" id="6RW5">
    <property type="method" value="EM"/>
    <property type="resolution" value="3.14 A"/>
    <property type="chains" value="R=1-360"/>
</dbReference>
<dbReference type="PDB" id="6VLZ">
    <property type="method" value="EM"/>
    <property type="resolution" value="2.97 A"/>
    <property type="chains" value="AR=1-360"/>
</dbReference>
<dbReference type="PDB" id="6VMI">
    <property type="method" value="EM"/>
    <property type="resolution" value="2.96 A"/>
    <property type="chains" value="AR=1-360"/>
</dbReference>
<dbReference type="PDB" id="6ZM5">
    <property type="method" value="EM"/>
    <property type="resolution" value="2.89 A"/>
    <property type="chains" value="AR=1-360"/>
</dbReference>
<dbReference type="PDB" id="6ZM6">
    <property type="method" value="EM"/>
    <property type="resolution" value="2.59 A"/>
    <property type="chains" value="AR=1-360"/>
</dbReference>
<dbReference type="PDB" id="6ZS9">
    <property type="method" value="EM"/>
    <property type="resolution" value="4.00 A"/>
    <property type="chains" value="AR=1-360"/>
</dbReference>
<dbReference type="PDB" id="6ZSA">
    <property type="method" value="EM"/>
    <property type="resolution" value="4.00 A"/>
    <property type="chains" value="AR=1-360"/>
</dbReference>
<dbReference type="PDB" id="6ZSB">
    <property type="method" value="EM"/>
    <property type="resolution" value="4.50 A"/>
    <property type="chains" value="AR=1-360"/>
</dbReference>
<dbReference type="PDB" id="6ZSC">
    <property type="method" value="EM"/>
    <property type="resolution" value="3.50 A"/>
    <property type="chains" value="AR=1-360"/>
</dbReference>
<dbReference type="PDB" id="6ZSD">
    <property type="method" value="EM"/>
    <property type="resolution" value="3.70 A"/>
    <property type="chains" value="AR=1-360"/>
</dbReference>
<dbReference type="PDB" id="6ZSE">
    <property type="method" value="EM"/>
    <property type="resolution" value="5.00 A"/>
    <property type="chains" value="AR=1-360"/>
</dbReference>
<dbReference type="PDB" id="6ZSG">
    <property type="method" value="EM"/>
    <property type="resolution" value="4.00 A"/>
    <property type="chains" value="AR=1-360"/>
</dbReference>
<dbReference type="PDB" id="7A5F">
    <property type="method" value="EM"/>
    <property type="resolution" value="4.40 A"/>
    <property type="chains" value="R6=1-360"/>
</dbReference>
<dbReference type="PDB" id="7A5G">
    <property type="method" value="EM"/>
    <property type="resolution" value="4.33 A"/>
    <property type="chains" value="R6=1-360"/>
</dbReference>
<dbReference type="PDB" id="7A5I">
    <property type="method" value="EM"/>
    <property type="resolution" value="3.70 A"/>
    <property type="chains" value="R6=1-360"/>
</dbReference>
<dbReference type="PDB" id="7A5K">
    <property type="method" value="EM"/>
    <property type="resolution" value="3.70 A"/>
    <property type="chains" value="R6=1-360"/>
</dbReference>
<dbReference type="PDB" id="7L08">
    <property type="method" value="EM"/>
    <property type="resolution" value="3.49 A"/>
    <property type="chains" value="AR=1-360"/>
</dbReference>
<dbReference type="PDB" id="7OG4">
    <property type="method" value="EM"/>
    <property type="resolution" value="3.80 A"/>
    <property type="chains" value="AR=1-360"/>
</dbReference>
<dbReference type="PDB" id="7P2E">
    <property type="method" value="EM"/>
    <property type="resolution" value="2.40 A"/>
    <property type="chains" value="R=1-360"/>
</dbReference>
<dbReference type="PDB" id="7PNX">
    <property type="method" value="EM"/>
    <property type="resolution" value="2.76 A"/>
    <property type="chains" value="R=1-360"/>
</dbReference>
<dbReference type="PDB" id="7PNY">
    <property type="method" value="EM"/>
    <property type="resolution" value="3.06 A"/>
    <property type="chains" value="R=1-360"/>
</dbReference>
<dbReference type="PDB" id="7PNZ">
    <property type="method" value="EM"/>
    <property type="resolution" value="3.09 A"/>
    <property type="chains" value="R=1-360"/>
</dbReference>
<dbReference type="PDB" id="7PO0">
    <property type="method" value="EM"/>
    <property type="resolution" value="2.90 A"/>
    <property type="chains" value="R=1-360"/>
</dbReference>
<dbReference type="PDB" id="7PO1">
    <property type="method" value="EM"/>
    <property type="resolution" value="2.92 A"/>
    <property type="chains" value="R=1-360"/>
</dbReference>
<dbReference type="PDB" id="7PO2">
    <property type="method" value="EM"/>
    <property type="resolution" value="3.09 A"/>
    <property type="chains" value="R=1-360"/>
</dbReference>
<dbReference type="PDB" id="7PO3">
    <property type="method" value="EM"/>
    <property type="resolution" value="2.92 A"/>
    <property type="chains" value="R=1-360"/>
</dbReference>
<dbReference type="PDB" id="7QI4">
    <property type="method" value="EM"/>
    <property type="resolution" value="2.21 A"/>
    <property type="chains" value="AR=1-360"/>
</dbReference>
<dbReference type="PDB" id="7QI5">
    <property type="method" value="EM"/>
    <property type="resolution" value="2.63 A"/>
    <property type="chains" value="AR=1-360"/>
</dbReference>
<dbReference type="PDB" id="7QI6">
    <property type="method" value="EM"/>
    <property type="resolution" value="2.98 A"/>
    <property type="chains" value="AR=1-360"/>
</dbReference>
<dbReference type="PDB" id="8ANY">
    <property type="method" value="EM"/>
    <property type="resolution" value="2.85 A"/>
    <property type="chains" value="AR=1-360"/>
</dbReference>
<dbReference type="PDB" id="8CSP">
    <property type="method" value="EM"/>
    <property type="resolution" value="2.66 A"/>
    <property type="chains" value="R=1-360"/>
</dbReference>
<dbReference type="PDB" id="8CSQ">
    <property type="method" value="EM"/>
    <property type="resolution" value="2.54 A"/>
    <property type="chains" value="R=1-360"/>
</dbReference>
<dbReference type="PDB" id="8CSR">
    <property type="method" value="EM"/>
    <property type="resolution" value="2.54 A"/>
    <property type="chains" value="R=1-360"/>
</dbReference>
<dbReference type="PDB" id="8CSS">
    <property type="method" value="EM"/>
    <property type="resolution" value="2.36 A"/>
    <property type="chains" value="R=1-360"/>
</dbReference>
<dbReference type="PDB" id="8CST">
    <property type="method" value="EM"/>
    <property type="resolution" value="2.85 A"/>
    <property type="chains" value="R=1-360"/>
</dbReference>
<dbReference type="PDB" id="8CSU">
    <property type="method" value="EM"/>
    <property type="resolution" value="3.03 A"/>
    <property type="chains" value="R=1-360"/>
</dbReference>
<dbReference type="PDB" id="8K2A">
    <property type="method" value="EM"/>
    <property type="resolution" value="2.90 A"/>
    <property type="chains" value="SX=1-360"/>
</dbReference>
<dbReference type="PDB" id="8OIR">
    <property type="method" value="EM"/>
    <property type="resolution" value="3.10 A"/>
    <property type="chains" value="AR=1-360"/>
</dbReference>
<dbReference type="PDB" id="8OIS">
    <property type="method" value="EM"/>
    <property type="resolution" value="3.00 A"/>
    <property type="chains" value="AR=1-360"/>
</dbReference>
<dbReference type="PDB" id="8QRK">
    <property type="method" value="EM"/>
    <property type="resolution" value="6.69 A"/>
    <property type="chains" value="R=1-360"/>
</dbReference>
<dbReference type="PDB" id="8QRL">
    <property type="method" value="EM"/>
    <property type="resolution" value="3.34 A"/>
    <property type="chains" value="R=1-360"/>
</dbReference>
<dbReference type="PDB" id="8QRM">
    <property type="method" value="EM"/>
    <property type="resolution" value="3.05 A"/>
    <property type="chains" value="R=1-360"/>
</dbReference>
<dbReference type="PDB" id="8QRN">
    <property type="method" value="EM"/>
    <property type="resolution" value="2.98 A"/>
    <property type="chains" value="R=1-360"/>
</dbReference>
<dbReference type="PDB" id="8RRI">
    <property type="method" value="EM"/>
    <property type="resolution" value="2.40 A"/>
    <property type="chains" value="AR=1-360"/>
</dbReference>
<dbReference type="PDB" id="8XT0">
    <property type="method" value="EM"/>
    <property type="resolution" value="3.20 A"/>
    <property type="chains" value="SX=1-360"/>
</dbReference>
<dbReference type="PDB" id="8XT2">
    <property type="method" value="EM"/>
    <property type="resolution" value="3.30 A"/>
    <property type="chains" value="SX=1-360"/>
</dbReference>
<dbReference type="PDBsum" id="3J9M"/>
<dbReference type="PDBsum" id="6NU2"/>
<dbReference type="PDBsum" id="6NU3"/>
<dbReference type="PDBsum" id="6RW4"/>
<dbReference type="PDBsum" id="6RW5"/>
<dbReference type="PDBsum" id="6VLZ"/>
<dbReference type="PDBsum" id="6VMI"/>
<dbReference type="PDBsum" id="6ZM5"/>
<dbReference type="PDBsum" id="6ZM6"/>
<dbReference type="PDBsum" id="6ZS9"/>
<dbReference type="PDBsum" id="6ZSA"/>
<dbReference type="PDBsum" id="6ZSB"/>
<dbReference type="PDBsum" id="6ZSC"/>
<dbReference type="PDBsum" id="6ZSD"/>
<dbReference type="PDBsum" id="6ZSE"/>
<dbReference type="PDBsum" id="6ZSG"/>
<dbReference type="PDBsum" id="7A5F"/>
<dbReference type="PDBsum" id="7A5G"/>
<dbReference type="PDBsum" id="7A5I"/>
<dbReference type="PDBsum" id="7A5K"/>
<dbReference type="PDBsum" id="7L08"/>
<dbReference type="PDBsum" id="7OG4"/>
<dbReference type="PDBsum" id="7P2E"/>
<dbReference type="PDBsum" id="7PNX"/>
<dbReference type="PDBsum" id="7PNY"/>
<dbReference type="PDBsum" id="7PNZ"/>
<dbReference type="PDBsum" id="7PO0"/>
<dbReference type="PDBsum" id="7PO1"/>
<dbReference type="PDBsum" id="7PO2"/>
<dbReference type="PDBsum" id="7PO3"/>
<dbReference type="PDBsum" id="7QI4"/>
<dbReference type="PDBsum" id="7QI5"/>
<dbReference type="PDBsum" id="7QI6"/>
<dbReference type="PDBsum" id="8ANY"/>
<dbReference type="PDBsum" id="8CSP"/>
<dbReference type="PDBsum" id="8CSQ"/>
<dbReference type="PDBsum" id="8CSR"/>
<dbReference type="PDBsum" id="8CSS"/>
<dbReference type="PDBsum" id="8CST"/>
<dbReference type="PDBsum" id="8CSU"/>
<dbReference type="PDBsum" id="8K2A"/>
<dbReference type="PDBsum" id="8OIR"/>
<dbReference type="PDBsum" id="8OIS"/>
<dbReference type="PDBsum" id="8QRK"/>
<dbReference type="PDBsum" id="8QRL"/>
<dbReference type="PDBsum" id="8QRM"/>
<dbReference type="PDBsum" id="8QRN"/>
<dbReference type="PDBsum" id="8RRI"/>
<dbReference type="PDBsum" id="8XT0"/>
<dbReference type="PDBsum" id="8XT2"/>
<dbReference type="EMDB" id="EMD-0514"/>
<dbReference type="EMDB" id="EMD-0515"/>
<dbReference type="EMDB" id="EMD-10021"/>
<dbReference type="EMDB" id="EMD-10022"/>
<dbReference type="EMDB" id="EMD-11278"/>
<dbReference type="EMDB" id="EMD-11279"/>
<dbReference type="EMDB" id="EMD-11390"/>
<dbReference type="EMDB" id="EMD-11391"/>
<dbReference type="EMDB" id="EMD-11392"/>
<dbReference type="EMDB" id="EMD-11393"/>
<dbReference type="EMDB" id="EMD-11394"/>
<dbReference type="EMDB" id="EMD-11395"/>
<dbReference type="EMDB" id="EMD-11397"/>
<dbReference type="EMDB" id="EMD-11641"/>
<dbReference type="EMDB" id="EMD-11642"/>
<dbReference type="EMDB" id="EMD-11644"/>
<dbReference type="EMDB" id="EMD-11646"/>
<dbReference type="EMDB" id="EMD-12877"/>
<dbReference type="EMDB" id="EMD-13170"/>
<dbReference type="EMDB" id="EMD-13555"/>
<dbReference type="EMDB" id="EMD-13556"/>
<dbReference type="EMDB" id="EMD-13557"/>
<dbReference type="EMDB" id="EMD-13558"/>
<dbReference type="EMDB" id="EMD-13559"/>
<dbReference type="EMDB" id="EMD-13560"/>
<dbReference type="EMDB" id="EMD-13561"/>
<dbReference type="EMDB" id="EMD-13980"/>
<dbReference type="EMDB" id="EMD-13981"/>
<dbReference type="EMDB" id="EMD-13982"/>
<dbReference type="EMDB" id="EMD-15544"/>
<dbReference type="EMDB" id="EMD-16897"/>
<dbReference type="EMDB" id="EMD-16898"/>
<dbReference type="EMDB" id="EMD-19460"/>
<dbReference type="EMDB" id="EMD-21233"/>
<dbReference type="EMDB" id="EMD-21242"/>
<dbReference type="EMDB" id="EMD-23096"/>
<dbReference type="EMDB" id="EMD-26966"/>
<dbReference type="EMDB" id="EMD-26967"/>
<dbReference type="EMDB" id="EMD-26968"/>
<dbReference type="EMDB" id="EMD-26969"/>
<dbReference type="EMDB" id="EMD-26970"/>
<dbReference type="EMDB" id="EMD-26971"/>
<dbReference type="EMDB" id="EMD-36836"/>
<dbReference type="EMDB" id="EMD-38632"/>
<dbReference type="EMDB" id="EMD-38634"/>
<dbReference type="SMR" id="P82650"/>
<dbReference type="BioGRID" id="121269">
    <property type="interactions" value="310"/>
</dbReference>
<dbReference type="ComplexPortal" id="CPX-5225">
    <property type="entry name" value="28S mitochondrial small ribosomal subunit"/>
</dbReference>
<dbReference type="CORUM" id="P82650"/>
<dbReference type="FunCoup" id="P82650">
    <property type="interactions" value="1793"/>
</dbReference>
<dbReference type="IntAct" id="P82650">
    <property type="interactions" value="131"/>
</dbReference>
<dbReference type="MINT" id="P82650"/>
<dbReference type="STRING" id="9606.ENSP00000418008"/>
<dbReference type="GlyGen" id="P82650">
    <property type="glycosylation" value="1 site, 1 O-linked glycan (1 site)"/>
</dbReference>
<dbReference type="iPTMnet" id="P82650"/>
<dbReference type="MetOSite" id="P82650"/>
<dbReference type="PhosphoSitePlus" id="P82650"/>
<dbReference type="SwissPalm" id="P82650"/>
<dbReference type="BioMuta" id="MRPS22"/>
<dbReference type="DMDM" id="13633893"/>
<dbReference type="jPOST" id="P82650"/>
<dbReference type="MassIVE" id="P82650"/>
<dbReference type="PaxDb" id="9606-ENSP00000418008"/>
<dbReference type="PeptideAtlas" id="P82650"/>
<dbReference type="ProteomicsDB" id="57709">
    <molecule id="P82650-1"/>
</dbReference>
<dbReference type="ProteomicsDB" id="80721"/>
<dbReference type="Pumba" id="P82650"/>
<dbReference type="TopDownProteomics" id="P82650-1">
    <molecule id="P82650-1"/>
</dbReference>
<dbReference type="Antibodypedia" id="1600">
    <property type="antibodies" value="185 antibodies from 27 providers"/>
</dbReference>
<dbReference type="DNASU" id="56945"/>
<dbReference type="Ensembl" id="ENST00000495075.5">
    <molecule id="P82650-1"/>
    <property type="protein sequence ID" value="ENSP00000418008.1"/>
    <property type="gene ID" value="ENSG00000175110.14"/>
</dbReference>
<dbReference type="Ensembl" id="ENST00000498505.5">
    <molecule id="P82650-2"/>
    <property type="protein sequence ID" value="ENSP00000420482.1"/>
    <property type="gene ID" value="ENSG00000175110.14"/>
</dbReference>
<dbReference type="Ensembl" id="ENST00000680020.1">
    <molecule id="P82650-1"/>
    <property type="protein sequence ID" value="ENSP00000505414.1"/>
    <property type="gene ID" value="ENSG00000175110.14"/>
</dbReference>
<dbReference type="Ensembl" id="ENST00000688697.1">
    <molecule id="P82650-1"/>
    <property type="protein sequence ID" value="ENSP00000510396.1"/>
    <property type="gene ID" value="ENSG00000175110.14"/>
</dbReference>
<dbReference type="GeneID" id="56945"/>
<dbReference type="KEGG" id="hsa:56945"/>
<dbReference type="MANE-Select" id="ENST00000680020.1">
    <property type="protein sequence ID" value="ENSP00000505414.1"/>
    <property type="RefSeq nucleotide sequence ID" value="NM_020191.4"/>
    <property type="RefSeq protein sequence ID" value="NP_064576.1"/>
</dbReference>
<dbReference type="UCSC" id="uc003etb.4">
    <molecule id="P82650-1"/>
    <property type="organism name" value="human"/>
</dbReference>
<dbReference type="AGR" id="HGNC:14508"/>
<dbReference type="CTD" id="56945"/>
<dbReference type="DisGeNET" id="56945"/>
<dbReference type="GeneCards" id="MRPS22"/>
<dbReference type="HGNC" id="HGNC:14508">
    <property type="gene designation" value="MRPS22"/>
</dbReference>
<dbReference type="HPA" id="ENSG00000175110">
    <property type="expression patterns" value="Low tissue specificity"/>
</dbReference>
<dbReference type="MalaCards" id="MRPS22"/>
<dbReference type="MIM" id="605810">
    <property type="type" value="gene"/>
</dbReference>
<dbReference type="MIM" id="611719">
    <property type="type" value="phenotype"/>
</dbReference>
<dbReference type="MIM" id="618117">
    <property type="type" value="phenotype"/>
</dbReference>
<dbReference type="neXtProt" id="NX_P82650"/>
<dbReference type="OpenTargets" id="ENSG00000175110"/>
<dbReference type="Orphanet" id="243">
    <property type="disease" value="46,XX gonadal dysgenesis"/>
</dbReference>
<dbReference type="Orphanet" id="137908">
    <property type="disease" value="Hypotonia with lactic acidemia and hyperammonemia"/>
</dbReference>
<dbReference type="PharmGKB" id="PA31010"/>
<dbReference type="VEuPathDB" id="HostDB:ENSG00000175110"/>
<dbReference type="eggNOG" id="KOG3890">
    <property type="taxonomic scope" value="Eukaryota"/>
</dbReference>
<dbReference type="GeneTree" id="ENSGT00390000006095"/>
<dbReference type="InParanoid" id="P82650"/>
<dbReference type="OMA" id="GYIELTL"/>
<dbReference type="OrthoDB" id="10052321at2759"/>
<dbReference type="PAN-GO" id="P82650">
    <property type="GO annotations" value="2 GO annotations based on evolutionary models"/>
</dbReference>
<dbReference type="PhylomeDB" id="P82650"/>
<dbReference type="TreeFam" id="TF312882"/>
<dbReference type="PathwayCommons" id="P82650"/>
<dbReference type="Reactome" id="R-HSA-5368286">
    <property type="pathway name" value="Mitochondrial translation initiation"/>
</dbReference>
<dbReference type="Reactome" id="R-HSA-5389840">
    <property type="pathway name" value="Mitochondrial translation elongation"/>
</dbReference>
<dbReference type="Reactome" id="R-HSA-5419276">
    <property type="pathway name" value="Mitochondrial translation termination"/>
</dbReference>
<dbReference type="SignaLink" id="P82650"/>
<dbReference type="SIGNOR" id="P82650"/>
<dbReference type="BioGRID-ORCS" id="56945">
    <property type="hits" value="423 hits in 1164 CRISPR screens"/>
</dbReference>
<dbReference type="ChiTaRS" id="MRPS22">
    <property type="organism name" value="human"/>
</dbReference>
<dbReference type="GeneWiki" id="MRPS22"/>
<dbReference type="GenomeRNAi" id="56945"/>
<dbReference type="Pharos" id="P82650">
    <property type="development level" value="Tbio"/>
</dbReference>
<dbReference type="PRO" id="PR:P82650"/>
<dbReference type="Proteomes" id="UP000005640">
    <property type="component" value="Chromosome 3"/>
</dbReference>
<dbReference type="RNAct" id="P82650">
    <property type="molecule type" value="protein"/>
</dbReference>
<dbReference type="Bgee" id="ENSG00000175110">
    <property type="expression patterns" value="Expressed in adrenal tissue and 199 other cell types or tissues"/>
</dbReference>
<dbReference type="ExpressionAtlas" id="P82650">
    <property type="expression patterns" value="baseline and differential"/>
</dbReference>
<dbReference type="GO" id="GO:0005743">
    <property type="term" value="C:mitochondrial inner membrane"/>
    <property type="evidence" value="ECO:0000304"/>
    <property type="project" value="Reactome"/>
</dbReference>
<dbReference type="GO" id="GO:0005761">
    <property type="term" value="C:mitochondrial ribosome"/>
    <property type="evidence" value="ECO:0000303"/>
    <property type="project" value="UniProtKB"/>
</dbReference>
<dbReference type="GO" id="GO:0005763">
    <property type="term" value="C:mitochondrial small ribosomal subunit"/>
    <property type="evidence" value="ECO:0000314"/>
    <property type="project" value="MGI"/>
</dbReference>
<dbReference type="GO" id="GO:0005739">
    <property type="term" value="C:mitochondrion"/>
    <property type="evidence" value="ECO:0000314"/>
    <property type="project" value="HPA"/>
</dbReference>
<dbReference type="GO" id="GO:0003735">
    <property type="term" value="F:structural constituent of ribosome"/>
    <property type="evidence" value="ECO:0000314"/>
    <property type="project" value="MGI"/>
</dbReference>
<dbReference type="GO" id="GO:0032543">
    <property type="term" value="P:mitochondrial translation"/>
    <property type="evidence" value="ECO:0000303"/>
    <property type="project" value="ComplexPortal"/>
</dbReference>
<dbReference type="InterPro" id="IPR019374">
    <property type="entry name" value="Ribosomal_mS22"/>
</dbReference>
<dbReference type="PANTHER" id="PTHR13071">
    <property type="entry name" value="MITOCHONDRIAL 28S RIBOSOMAL PROTEIN S22"/>
    <property type="match status" value="1"/>
</dbReference>
<dbReference type="PANTHER" id="PTHR13071:SF4">
    <property type="entry name" value="SMALL RIBOSOMAL SUBUNIT PROTEIN MS22"/>
    <property type="match status" value="1"/>
</dbReference>
<dbReference type="Pfam" id="PF10245">
    <property type="entry name" value="MRP-S22"/>
    <property type="match status" value="1"/>
</dbReference>
<reference key="1">
    <citation type="journal article" date="2001" name="Nat. Genet.">
        <title>The putative forkhead transcription factor FOXL2 is mutated in blepharophimosis/ptosis/epicanthus inversus syndrome.</title>
        <authorList>
            <person name="Crisponi L."/>
            <person name="Deiana M."/>
            <person name="Loi A."/>
            <person name="Chiappe F."/>
            <person name="Uda M."/>
            <person name="Amati P."/>
            <person name="Bisceglia L."/>
            <person name="Zelante L."/>
            <person name="Nagaraja R."/>
            <person name="Porcu S."/>
            <person name="Ristaldi M.S."/>
            <person name="Marzella R."/>
            <person name="Rocchi M."/>
            <person name="Nicolino M."/>
            <person name="Lienhardt-Roussie A."/>
            <person name="Nivelon A."/>
            <person name="Verloes A."/>
            <person name="Schlessinger D."/>
            <person name="Gasparini P."/>
            <person name="Bonneau D."/>
            <person name="Cao A."/>
            <person name="Pilia G."/>
        </authorList>
    </citation>
    <scope>NUCLEOTIDE SEQUENCE [MRNA] (ISOFORM 1)</scope>
</reference>
<reference key="2">
    <citation type="submission" date="1998-05" db="EMBL/GenBank/DDBJ databases">
        <authorList>
            <person name="Mao Y.M."/>
            <person name="Xie Y."/>
            <person name="Zheng Z.H."/>
        </authorList>
    </citation>
    <scope>NUCLEOTIDE SEQUENCE [MRNA] (ISOFORM 2)</scope>
    <source>
        <tissue>Brain</tissue>
    </source>
</reference>
<reference key="3">
    <citation type="submission" date="2000-01" db="EMBL/GenBank/DDBJ databases">
        <title>A novel gene expressed in human liver cancer tissue.</title>
        <authorList>
            <person name="Li Y."/>
            <person name="Wu T."/>
            <person name="Xu S."/>
            <person name="Ren S."/>
            <person name="Chen Z."/>
            <person name="Han Z."/>
        </authorList>
    </citation>
    <scope>NUCLEOTIDE SEQUENCE [LARGE SCALE MRNA] (ISOFORM 1)</scope>
    <source>
        <tissue>Liver cancer</tissue>
    </source>
</reference>
<reference key="4">
    <citation type="journal article" date="2006" name="Nature">
        <title>The DNA sequence, annotation and analysis of human chromosome 3.</title>
        <authorList>
            <person name="Muzny D.M."/>
            <person name="Scherer S.E."/>
            <person name="Kaul R."/>
            <person name="Wang J."/>
            <person name="Yu J."/>
            <person name="Sudbrak R."/>
            <person name="Buhay C.J."/>
            <person name="Chen R."/>
            <person name="Cree A."/>
            <person name="Ding Y."/>
            <person name="Dugan-Rocha S."/>
            <person name="Gill R."/>
            <person name="Gunaratne P."/>
            <person name="Harris R.A."/>
            <person name="Hawes A.C."/>
            <person name="Hernandez J."/>
            <person name="Hodgson A.V."/>
            <person name="Hume J."/>
            <person name="Jackson A."/>
            <person name="Khan Z.M."/>
            <person name="Kovar-Smith C."/>
            <person name="Lewis L.R."/>
            <person name="Lozado R.J."/>
            <person name="Metzker M.L."/>
            <person name="Milosavljevic A."/>
            <person name="Miner G.R."/>
            <person name="Morgan M.B."/>
            <person name="Nazareth L.V."/>
            <person name="Scott G."/>
            <person name="Sodergren E."/>
            <person name="Song X.-Z."/>
            <person name="Steffen D."/>
            <person name="Wei S."/>
            <person name="Wheeler D.A."/>
            <person name="Wright M.W."/>
            <person name="Worley K.C."/>
            <person name="Yuan Y."/>
            <person name="Zhang Z."/>
            <person name="Adams C.Q."/>
            <person name="Ansari-Lari M.A."/>
            <person name="Ayele M."/>
            <person name="Brown M.J."/>
            <person name="Chen G."/>
            <person name="Chen Z."/>
            <person name="Clendenning J."/>
            <person name="Clerc-Blankenburg K.P."/>
            <person name="Chen R."/>
            <person name="Chen Z."/>
            <person name="Davis C."/>
            <person name="Delgado O."/>
            <person name="Dinh H.H."/>
            <person name="Dong W."/>
            <person name="Draper H."/>
            <person name="Ernst S."/>
            <person name="Fu G."/>
            <person name="Gonzalez-Garay M.L."/>
            <person name="Garcia D.K."/>
            <person name="Gillett W."/>
            <person name="Gu J."/>
            <person name="Hao B."/>
            <person name="Haugen E."/>
            <person name="Havlak P."/>
            <person name="He X."/>
            <person name="Hennig S."/>
            <person name="Hu S."/>
            <person name="Huang W."/>
            <person name="Jackson L.R."/>
            <person name="Jacob L.S."/>
            <person name="Kelly S.H."/>
            <person name="Kube M."/>
            <person name="Levy R."/>
            <person name="Li Z."/>
            <person name="Liu B."/>
            <person name="Liu J."/>
            <person name="Liu W."/>
            <person name="Lu J."/>
            <person name="Maheshwari M."/>
            <person name="Nguyen B.-V."/>
            <person name="Okwuonu G.O."/>
            <person name="Palmeiri A."/>
            <person name="Pasternak S."/>
            <person name="Perez L.M."/>
            <person name="Phelps K.A."/>
            <person name="Plopper F.J."/>
            <person name="Qiang B."/>
            <person name="Raymond C."/>
            <person name="Rodriguez R."/>
            <person name="Saenphimmachak C."/>
            <person name="Santibanez J."/>
            <person name="Shen H."/>
            <person name="Shen Y."/>
            <person name="Subramanian S."/>
            <person name="Tabor P.E."/>
            <person name="Verduzco D."/>
            <person name="Waldron L."/>
            <person name="Wang J."/>
            <person name="Wang J."/>
            <person name="Wang Q."/>
            <person name="Williams G.A."/>
            <person name="Wong G.K.-S."/>
            <person name="Yao Z."/>
            <person name="Zhang J."/>
            <person name="Zhang X."/>
            <person name="Zhao G."/>
            <person name="Zhou J."/>
            <person name="Zhou Y."/>
            <person name="Nelson D."/>
            <person name="Lehrach H."/>
            <person name="Reinhardt R."/>
            <person name="Naylor S.L."/>
            <person name="Yang H."/>
            <person name="Olson M."/>
            <person name="Weinstock G."/>
            <person name="Gibbs R.A."/>
        </authorList>
    </citation>
    <scope>NUCLEOTIDE SEQUENCE [LARGE SCALE GENOMIC DNA]</scope>
</reference>
<reference key="5">
    <citation type="journal article" date="2004" name="Genome Res.">
        <title>The status, quality, and expansion of the NIH full-length cDNA project: the Mammalian Gene Collection (MGC).</title>
        <authorList>
            <consortium name="The MGC Project Team"/>
        </authorList>
    </citation>
    <scope>NUCLEOTIDE SEQUENCE [LARGE SCALE MRNA] (ISOFORM 1)</scope>
    <source>
        <tissue>Muscle</tissue>
    </source>
</reference>
<reference key="6">
    <citation type="journal article" date="2000" name="J. Biol. Chem.">
        <title>A proteomics approach to the identification of mammalian mitochondrial small subunit ribosomal proteins.</title>
        <authorList>
            <person name="Koc E.C."/>
            <person name="Burkhart W."/>
            <person name="Blackburn K."/>
            <person name="Moseley A."/>
            <person name="Koc H."/>
            <person name="Spremulli L.L."/>
        </authorList>
    </citation>
    <scope>IDENTIFICATION</scope>
</reference>
<reference key="7">
    <citation type="journal article" date="2009" name="Science">
        <title>Lysine acetylation targets protein complexes and co-regulates major cellular functions.</title>
        <authorList>
            <person name="Choudhary C."/>
            <person name="Kumar C."/>
            <person name="Gnad F."/>
            <person name="Nielsen M.L."/>
            <person name="Rehman M."/>
            <person name="Walther T.C."/>
            <person name="Olsen J.V."/>
            <person name="Mann M."/>
        </authorList>
    </citation>
    <scope>ACETYLATION [LARGE SCALE ANALYSIS] AT LYS-211</scope>
    <scope>IDENTIFICATION BY MASS SPECTROMETRY [LARGE SCALE ANALYSIS]</scope>
</reference>
<reference key="8">
    <citation type="journal article" date="2011" name="BMC Syst. Biol.">
        <title>Initial characterization of the human central proteome.</title>
        <authorList>
            <person name="Burkard T.R."/>
            <person name="Planyavsky M."/>
            <person name="Kaupe I."/>
            <person name="Breitwieser F.P."/>
            <person name="Buerckstuemmer T."/>
            <person name="Bennett K.L."/>
            <person name="Superti-Furga G."/>
            <person name="Colinge J."/>
        </authorList>
    </citation>
    <scope>IDENTIFICATION BY MASS SPECTROMETRY [LARGE SCALE ANALYSIS]</scope>
</reference>
<reference key="9">
    <citation type="journal article" date="2013" name="J. Proteome Res.">
        <title>Toward a comprehensive characterization of a human cancer cell phosphoproteome.</title>
        <authorList>
            <person name="Zhou H."/>
            <person name="Di Palma S."/>
            <person name="Preisinger C."/>
            <person name="Peng M."/>
            <person name="Polat A.N."/>
            <person name="Heck A.J."/>
            <person name="Mohammed S."/>
        </authorList>
    </citation>
    <scope>PHOSPHORYLATION [LARGE SCALE ANALYSIS] AT SER-54</scope>
    <scope>IDENTIFICATION BY MASS SPECTROMETRY [LARGE SCALE ANALYSIS]</scope>
    <source>
        <tissue>Erythroleukemia</tissue>
    </source>
</reference>
<reference key="10">
    <citation type="journal article" date="2015" name="Proteomics">
        <title>N-terminome analysis of the human mitochondrial proteome.</title>
        <authorList>
            <person name="Vaca Jacome A.S."/>
            <person name="Rabilloud T."/>
            <person name="Schaeffer-Reiss C."/>
            <person name="Rompais M."/>
            <person name="Ayoub D."/>
            <person name="Lane L."/>
            <person name="Bairoch A."/>
            <person name="Van Dorsselaer A."/>
            <person name="Carapito C."/>
        </authorList>
    </citation>
    <scope>IDENTIFICATION BY MASS SPECTROMETRY [LARGE SCALE ANALYSIS]</scope>
</reference>
<reference key="11">
    <citation type="journal article" date="2015" name="Science">
        <title>Ribosome. The structure of the human mitochondrial ribosome.</title>
        <authorList>
            <person name="Amunts A."/>
            <person name="Brown A."/>
            <person name="Toots J."/>
            <person name="Scheres S.H."/>
            <person name="Ramakrishnan V."/>
        </authorList>
    </citation>
    <scope>STRUCTURE BY ELECTRON MICROSCOPY (3.50 ANGSTROMS)</scope>
    <scope>SUBUNIT</scope>
    <scope>SUBCELLULAR LOCATION</scope>
</reference>
<reference key="12">
    <citation type="journal article" date="2007" name="J. Med. Genet.">
        <title>Antenatal mitochondrial disease caused by mitochondrial ribosomal protein (MRPS22) mutation.</title>
        <authorList>
            <person name="Saada A."/>
            <person name="Shaag A."/>
            <person name="Arnon S."/>
            <person name="Dolfin T."/>
            <person name="Miller C."/>
            <person name="Fuchs-Telem D."/>
            <person name="Lombes A."/>
            <person name="Elpeleg O."/>
        </authorList>
    </citation>
    <scope>VARIANT COXPD5 HIS-170</scope>
</reference>
<reference key="13">
    <citation type="journal article" date="2018" name="Hum. Mol. Genet.">
        <title>Mutations in the mitochondrial ribosomal protein MRPS22 lead to primary ovarian insufficiency.</title>
        <authorList>
            <person name="Chen A."/>
            <person name="Tiosano D."/>
            <person name="Guran T."/>
            <person name="Baris H.N."/>
            <person name="Bayram Y."/>
            <person name="Mory A."/>
            <person name="Shapiro-Kulnane L."/>
            <person name="Hodges C.A."/>
            <person name="Akdemir Z.C."/>
            <person name="Turan S."/>
            <person name="Jhangiani S.N."/>
            <person name="van den Akker F."/>
            <person name="Hoppel C.L."/>
            <person name="Salz H.K."/>
            <person name="Lupski J.R."/>
            <person name="Buchner D.A."/>
        </authorList>
    </citation>
    <scope>VARIANTS ODG7 GLN-135 AND HIS-202</scope>
    <scope>INVOLVEMENT IN ODG7</scope>
</reference>
<proteinExistence type="evidence at protein level"/>
<feature type="chain" id="PRO_0000087703" description="Small ribosomal subunit protein mS22">
    <location>
        <begin position="1"/>
        <end position="360"/>
    </location>
</feature>
<feature type="modified residue" description="Phosphoserine" evidence="8">
    <location>
        <position position="54"/>
    </location>
</feature>
<feature type="modified residue" description="N6-acetyllysine" evidence="7">
    <location>
        <position position="211"/>
    </location>
</feature>
<feature type="splice variant" id="VSP_056634" description="In isoform 2." evidence="5">
    <location>
        <position position="57"/>
    </location>
</feature>
<feature type="splice variant" id="VSP_056635" description="In isoform 2." evidence="5">
    <original>E</original>
    <variation>C</variation>
    <location>
        <position position="169"/>
    </location>
</feature>
<feature type="splice variant" id="VSP_056636" description="In isoform 2." evidence="5">
    <location>
        <begin position="170"/>
        <end position="360"/>
    </location>
</feature>
<feature type="sequence variant" id="VAR_081186" description="In ODG7; uncertain significance; dbSNP:rs774237195." evidence="3">
    <original>R</original>
    <variation>Q</variation>
    <location>
        <position position="135"/>
    </location>
</feature>
<feature type="sequence variant" id="VAR_042733" description="In COXPD5; dbSNP:rs119478059." evidence="1">
    <original>R</original>
    <variation>H</variation>
    <location>
        <position position="170"/>
    </location>
</feature>
<feature type="sequence variant" id="VAR_081187" description="In ODG7; uncertain significance; dbSNP:rs753345594." evidence="3">
    <original>R</original>
    <variation>H</variation>
    <location>
        <position position="202"/>
    </location>
</feature>
<feature type="helix" evidence="10">
    <location>
        <begin position="73"/>
        <end position="83"/>
    </location>
</feature>
<feature type="helix" evidence="10">
    <location>
        <begin position="87"/>
        <end position="90"/>
    </location>
</feature>
<feature type="strand" evidence="10">
    <location>
        <begin position="102"/>
        <end position="106"/>
    </location>
</feature>
<feature type="helix" evidence="10">
    <location>
        <begin position="108"/>
        <end position="125"/>
    </location>
</feature>
<feature type="strand" evidence="10">
    <location>
        <begin position="141"/>
        <end position="144"/>
    </location>
</feature>
<feature type="helix" evidence="10">
    <location>
        <begin position="146"/>
        <end position="148"/>
    </location>
</feature>
<feature type="strand" evidence="10">
    <location>
        <begin position="153"/>
        <end position="160"/>
    </location>
</feature>
<feature type="strand" evidence="10">
    <location>
        <begin position="163"/>
        <end position="165"/>
    </location>
</feature>
<feature type="helix" evidence="9">
    <location>
        <begin position="167"/>
        <end position="169"/>
    </location>
</feature>
<feature type="strand" evidence="10">
    <location>
        <begin position="172"/>
        <end position="175"/>
    </location>
</feature>
<feature type="strand" evidence="10">
    <location>
        <begin position="179"/>
        <end position="183"/>
    </location>
</feature>
<feature type="helix" evidence="10">
    <location>
        <begin position="186"/>
        <end position="196"/>
    </location>
</feature>
<feature type="helix" evidence="10">
    <location>
        <begin position="208"/>
        <end position="210"/>
    </location>
</feature>
<feature type="helix" evidence="10">
    <location>
        <begin position="212"/>
        <end position="220"/>
    </location>
</feature>
<feature type="helix" evidence="10">
    <location>
        <begin position="224"/>
        <end position="234"/>
    </location>
</feature>
<feature type="helix" evidence="10">
    <location>
        <begin position="240"/>
        <end position="256"/>
    </location>
</feature>
<feature type="helix" evidence="10">
    <location>
        <begin position="259"/>
        <end position="261"/>
    </location>
</feature>
<feature type="turn" evidence="10">
    <location>
        <begin position="262"/>
        <end position="264"/>
    </location>
</feature>
<feature type="strand" evidence="11">
    <location>
        <begin position="265"/>
        <end position="267"/>
    </location>
</feature>
<feature type="helix" evidence="10">
    <location>
        <begin position="268"/>
        <end position="277"/>
    </location>
</feature>
<feature type="helix" evidence="10">
    <location>
        <begin position="282"/>
        <end position="290"/>
    </location>
</feature>
<feature type="helix" evidence="10">
    <location>
        <begin position="294"/>
        <end position="307"/>
    </location>
</feature>
<feature type="helix" evidence="10">
    <location>
        <begin position="312"/>
        <end position="320"/>
    </location>
</feature>
<feature type="helix" evidence="10">
    <location>
        <begin position="325"/>
        <end position="335"/>
    </location>
</feature>
<feature type="helix" evidence="10">
    <location>
        <begin position="339"/>
        <end position="355"/>
    </location>
</feature>
<evidence type="ECO:0000269" key="1">
    <source>
    </source>
</evidence>
<evidence type="ECO:0000269" key="2">
    <source>
    </source>
</evidence>
<evidence type="ECO:0000269" key="3">
    <source>
    </source>
</evidence>
<evidence type="ECO:0000303" key="4">
    <source>
    </source>
</evidence>
<evidence type="ECO:0000303" key="5">
    <source ref="2"/>
</evidence>
<evidence type="ECO:0000305" key="6"/>
<evidence type="ECO:0007744" key="7">
    <source>
    </source>
</evidence>
<evidence type="ECO:0007744" key="8">
    <source>
    </source>
</evidence>
<evidence type="ECO:0007829" key="9">
    <source>
        <dbReference type="PDB" id="8CSQ"/>
    </source>
</evidence>
<evidence type="ECO:0007829" key="10">
    <source>
        <dbReference type="PDB" id="8CSS"/>
    </source>
</evidence>
<evidence type="ECO:0007829" key="11">
    <source>
        <dbReference type="PDB" id="8QRN"/>
    </source>
</evidence>
<keyword id="KW-0002">3D-structure</keyword>
<keyword id="KW-0007">Acetylation</keyword>
<keyword id="KW-0025">Alternative splicing</keyword>
<keyword id="KW-0225">Disease variant</keyword>
<keyword id="KW-0496">Mitochondrion</keyword>
<keyword id="KW-0597">Phosphoprotein</keyword>
<keyword id="KW-1274">Primary mitochondrial disease</keyword>
<keyword id="KW-1267">Proteomics identification</keyword>
<keyword id="KW-1185">Reference proteome</keyword>
<keyword id="KW-0687">Ribonucleoprotein</keyword>
<keyword id="KW-0689">Ribosomal protein</keyword>
<gene>
    <name type="primary">MRPS22</name>
    <name type="synonym">C3orf5</name>
    <name type="synonym">RPMS22</name>
    <name type="ORF">GK002</name>
</gene>
<name>RT22_HUMAN</name>
<accession>P82650</accession>
<accession>Q9H3I1</accession>